<keyword id="KW-0665">Pyrimidine biosynthesis</keyword>
<keyword id="KW-1185">Reference proteome</keyword>
<keyword id="KW-0808">Transferase</keyword>
<sequence length="321" mass="35130">MNAQLDNQGRLRHFLTTEGLPRPLLNQILDTAESFTGVIGKSVKKVPLLRGRTVINLFFEPSTRTRTTFELAATRLSADVLNIDVAVSSQSKGESLLDMLRNLEAMQCDAFVVRHGDSGTAEFIARHVRPGVSVLNAGDGRHAHPTQAMLDMFTIRQHKGDFEPLRVAIVGDILHSRVARSQIHALNGLGAGEVRVIAPRTLLPRDVETLGVRVFHDMQAGLRDVDVVMMLRLQRERMRGALLPSEGEYFKLYGLTEEKLSVAHPDAIIMHPGPINRGVEMNSAVADGPRSVILQQVTNGIAVRMALMSMLLGRAGGGEDA</sequence>
<comment type="function">
    <text evidence="1">Catalyzes the condensation of carbamoyl phosphate and aspartate to form carbamoyl aspartate and inorganic phosphate, the committed step in the de novo pyrimidine nucleotide biosynthesis pathway.</text>
</comment>
<comment type="catalytic activity">
    <reaction evidence="1">
        <text>carbamoyl phosphate + L-aspartate = N-carbamoyl-L-aspartate + phosphate + H(+)</text>
        <dbReference type="Rhea" id="RHEA:20013"/>
        <dbReference type="ChEBI" id="CHEBI:15378"/>
        <dbReference type="ChEBI" id="CHEBI:29991"/>
        <dbReference type="ChEBI" id="CHEBI:32814"/>
        <dbReference type="ChEBI" id="CHEBI:43474"/>
        <dbReference type="ChEBI" id="CHEBI:58228"/>
        <dbReference type="EC" id="2.1.3.2"/>
    </reaction>
</comment>
<comment type="pathway">
    <text evidence="1">Pyrimidine metabolism; UMP biosynthesis via de novo pathway; (S)-dihydroorotate from bicarbonate: step 2/3.</text>
</comment>
<comment type="subunit">
    <text evidence="1">Heterododecamer (2C3:3R2) of six catalytic PyrB chains organized as two trimers (C3), and six regulatory PyrI chains organized as three dimers (R2).</text>
</comment>
<comment type="similarity">
    <text evidence="1">Belongs to the aspartate/ornithine carbamoyltransferase superfamily. ATCase family.</text>
</comment>
<accession>Q0ABT6</accession>
<reference key="1">
    <citation type="submission" date="2006-08" db="EMBL/GenBank/DDBJ databases">
        <title>Complete sequence of Alkalilimnicola ehrilichei MLHE-1.</title>
        <authorList>
            <person name="Copeland A."/>
            <person name="Lucas S."/>
            <person name="Lapidus A."/>
            <person name="Barry K."/>
            <person name="Detter J.C."/>
            <person name="Glavina del Rio T."/>
            <person name="Hammon N."/>
            <person name="Israni S."/>
            <person name="Dalin E."/>
            <person name="Tice H."/>
            <person name="Pitluck S."/>
            <person name="Sims D."/>
            <person name="Brettin T."/>
            <person name="Bruce D."/>
            <person name="Han C."/>
            <person name="Tapia R."/>
            <person name="Gilna P."/>
            <person name="Schmutz J."/>
            <person name="Larimer F."/>
            <person name="Land M."/>
            <person name="Hauser L."/>
            <person name="Kyrpides N."/>
            <person name="Mikhailova N."/>
            <person name="Oremland R.S."/>
            <person name="Hoeft S.E."/>
            <person name="Switzer-Blum J."/>
            <person name="Kulp T."/>
            <person name="King G."/>
            <person name="Tabita R."/>
            <person name="Witte B."/>
            <person name="Santini J.M."/>
            <person name="Basu P."/>
            <person name="Hollibaugh J.T."/>
            <person name="Xie G."/>
            <person name="Stolz J.F."/>
            <person name="Richardson P."/>
        </authorList>
    </citation>
    <scope>NUCLEOTIDE SEQUENCE [LARGE SCALE GENOMIC DNA]</scope>
    <source>
        <strain>ATCC BAA-1101 / DSM 17681 / MLHE-1</strain>
    </source>
</reference>
<name>PYRB_ALKEH</name>
<organism>
    <name type="scientific">Alkalilimnicola ehrlichii (strain ATCC BAA-1101 / DSM 17681 / MLHE-1)</name>
    <dbReference type="NCBI Taxonomy" id="187272"/>
    <lineage>
        <taxon>Bacteria</taxon>
        <taxon>Pseudomonadati</taxon>
        <taxon>Pseudomonadota</taxon>
        <taxon>Gammaproteobacteria</taxon>
        <taxon>Chromatiales</taxon>
        <taxon>Ectothiorhodospiraceae</taxon>
        <taxon>Alkalilimnicola</taxon>
    </lineage>
</organism>
<dbReference type="EC" id="2.1.3.2" evidence="1"/>
<dbReference type="EMBL" id="CP000453">
    <property type="protein sequence ID" value="ABI55701.1"/>
    <property type="molecule type" value="Genomic_DNA"/>
</dbReference>
<dbReference type="RefSeq" id="WP_011628097.1">
    <property type="nucleotide sequence ID" value="NC_008340.1"/>
</dbReference>
<dbReference type="SMR" id="Q0ABT6"/>
<dbReference type="KEGG" id="aeh:Mlg_0346"/>
<dbReference type="eggNOG" id="COG0540">
    <property type="taxonomic scope" value="Bacteria"/>
</dbReference>
<dbReference type="HOGENOM" id="CLU_043846_2_0_6"/>
<dbReference type="OrthoDB" id="9774690at2"/>
<dbReference type="UniPathway" id="UPA00070">
    <property type="reaction ID" value="UER00116"/>
</dbReference>
<dbReference type="Proteomes" id="UP000001962">
    <property type="component" value="Chromosome"/>
</dbReference>
<dbReference type="GO" id="GO:0005829">
    <property type="term" value="C:cytosol"/>
    <property type="evidence" value="ECO:0007669"/>
    <property type="project" value="TreeGrafter"/>
</dbReference>
<dbReference type="GO" id="GO:0016597">
    <property type="term" value="F:amino acid binding"/>
    <property type="evidence" value="ECO:0007669"/>
    <property type="project" value="InterPro"/>
</dbReference>
<dbReference type="GO" id="GO:0004070">
    <property type="term" value="F:aspartate carbamoyltransferase activity"/>
    <property type="evidence" value="ECO:0007669"/>
    <property type="project" value="UniProtKB-UniRule"/>
</dbReference>
<dbReference type="GO" id="GO:0006207">
    <property type="term" value="P:'de novo' pyrimidine nucleobase biosynthetic process"/>
    <property type="evidence" value="ECO:0007669"/>
    <property type="project" value="InterPro"/>
</dbReference>
<dbReference type="GO" id="GO:0044205">
    <property type="term" value="P:'de novo' UMP biosynthetic process"/>
    <property type="evidence" value="ECO:0007669"/>
    <property type="project" value="UniProtKB-UniRule"/>
</dbReference>
<dbReference type="GO" id="GO:0006520">
    <property type="term" value="P:amino acid metabolic process"/>
    <property type="evidence" value="ECO:0007669"/>
    <property type="project" value="InterPro"/>
</dbReference>
<dbReference type="FunFam" id="3.40.50.1370:FF:000007">
    <property type="entry name" value="Aspartate carbamoyltransferase"/>
    <property type="match status" value="1"/>
</dbReference>
<dbReference type="Gene3D" id="3.40.50.1370">
    <property type="entry name" value="Aspartate/ornithine carbamoyltransferase"/>
    <property type="match status" value="2"/>
</dbReference>
<dbReference type="HAMAP" id="MF_00001">
    <property type="entry name" value="Asp_carb_tr"/>
    <property type="match status" value="1"/>
</dbReference>
<dbReference type="InterPro" id="IPR006132">
    <property type="entry name" value="Asp/Orn_carbamoyltranf_P-bd"/>
</dbReference>
<dbReference type="InterPro" id="IPR006130">
    <property type="entry name" value="Asp/Orn_carbamoylTrfase"/>
</dbReference>
<dbReference type="InterPro" id="IPR036901">
    <property type="entry name" value="Asp/Orn_carbamoylTrfase_sf"/>
</dbReference>
<dbReference type="InterPro" id="IPR002082">
    <property type="entry name" value="Asp_carbamoyltransf"/>
</dbReference>
<dbReference type="InterPro" id="IPR006131">
    <property type="entry name" value="Asp_carbamoyltransf_Asp/Orn-bd"/>
</dbReference>
<dbReference type="NCBIfam" id="TIGR00670">
    <property type="entry name" value="asp_carb_tr"/>
    <property type="match status" value="1"/>
</dbReference>
<dbReference type="NCBIfam" id="NF002032">
    <property type="entry name" value="PRK00856.1"/>
    <property type="match status" value="1"/>
</dbReference>
<dbReference type="PANTHER" id="PTHR45753:SF6">
    <property type="entry name" value="ASPARTATE CARBAMOYLTRANSFERASE"/>
    <property type="match status" value="1"/>
</dbReference>
<dbReference type="PANTHER" id="PTHR45753">
    <property type="entry name" value="ORNITHINE CARBAMOYLTRANSFERASE, MITOCHONDRIAL"/>
    <property type="match status" value="1"/>
</dbReference>
<dbReference type="Pfam" id="PF00185">
    <property type="entry name" value="OTCace"/>
    <property type="match status" value="1"/>
</dbReference>
<dbReference type="Pfam" id="PF02729">
    <property type="entry name" value="OTCace_N"/>
    <property type="match status" value="1"/>
</dbReference>
<dbReference type="PRINTS" id="PR00100">
    <property type="entry name" value="AOTCASE"/>
</dbReference>
<dbReference type="PRINTS" id="PR00101">
    <property type="entry name" value="ATCASE"/>
</dbReference>
<dbReference type="SUPFAM" id="SSF53671">
    <property type="entry name" value="Aspartate/ornithine carbamoyltransferase"/>
    <property type="match status" value="1"/>
</dbReference>
<dbReference type="PROSITE" id="PS00097">
    <property type="entry name" value="CARBAMOYLTRANSFERASE"/>
    <property type="match status" value="1"/>
</dbReference>
<evidence type="ECO:0000255" key="1">
    <source>
        <dbReference type="HAMAP-Rule" id="MF_00001"/>
    </source>
</evidence>
<proteinExistence type="inferred from homology"/>
<gene>
    <name evidence="1" type="primary">pyrB</name>
    <name type="ordered locus">Mlg_0346</name>
</gene>
<feature type="chain" id="PRO_0000321066" description="Aspartate carbamoyltransferase catalytic subunit">
    <location>
        <begin position="1"/>
        <end position="321"/>
    </location>
</feature>
<feature type="binding site" evidence="1">
    <location>
        <position position="64"/>
    </location>
    <ligand>
        <name>carbamoyl phosphate</name>
        <dbReference type="ChEBI" id="CHEBI:58228"/>
    </ligand>
</feature>
<feature type="binding site" evidence="1">
    <location>
        <position position="65"/>
    </location>
    <ligand>
        <name>carbamoyl phosphate</name>
        <dbReference type="ChEBI" id="CHEBI:58228"/>
    </ligand>
</feature>
<feature type="binding site" evidence="1">
    <location>
        <position position="92"/>
    </location>
    <ligand>
        <name>L-aspartate</name>
        <dbReference type="ChEBI" id="CHEBI:29991"/>
    </ligand>
</feature>
<feature type="binding site" evidence="1">
    <location>
        <position position="114"/>
    </location>
    <ligand>
        <name>carbamoyl phosphate</name>
        <dbReference type="ChEBI" id="CHEBI:58228"/>
    </ligand>
</feature>
<feature type="binding site" evidence="1">
    <location>
        <position position="144"/>
    </location>
    <ligand>
        <name>carbamoyl phosphate</name>
        <dbReference type="ChEBI" id="CHEBI:58228"/>
    </ligand>
</feature>
<feature type="binding site" evidence="1">
    <location>
        <position position="147"/>
    </location>
    <ligand>
        <name>carbamoyl phosphate</name>
        <dbReference type="ChEBI" id="CHEBI:58228"/>
    </ligand>
</feature>
<feature type="binding site" evidence="1">
    <location>
        <position position="177"/>
    </location>
    <ligand>
        <name>L-aspartate</name>
        <dbReference type="ChEBI" id="CHEBI:29991"/>
    </ligand>
</feature>
<feature type="binding site" evidence="1">
    <location>
        <position position="232"/>
    </location>
    <ligand>
        <name>L-aspartate</name>
        <dbReference type="ChEBI" id="CHEBI:29991"/>
    </ligand>
</feature>
<feature type="binding site" evidence="1">
    <location>
        <position position="273"/>
    </location>
    <ligand>
        <name>carbamoyl phosphate</name>
        <dbReference type="ChEBI" id="CHEBI:58228"/>
    </ligand>
</feature>
<feature type="binding site" evidence="1">
    <location>
        <position position="274"/>
    </location>
    <ligand>
        <name>carbamoyl phosphate</name>
        <dbReference type="ChEBI" id="CHEBI:58228"/>
    </ligand>
</feature>
<protein>
    <recommendedName>
        <fullName evidence="1">Aspartate carbamoyltransferase catalytic subunit</fullName>
        <ecNumber evidence="1">2.1.3.2</ecNumber>
    </recommendedName>
    <alternativeName>
        <fullName evidence="1">Aspartate transcarbamylase</fullName>
        <shortName evidence="1">ATCase</shortName>
    </alternativeName>
</protein>